<feature type="chain" id="PRO_0000283106" description="F-box/FBD/LRR-repeat protein At1g80470">
    <location>
        <begin position="1"/>
        <end position="464"/>
    </location>
</feature>
<feature type="domain" description="F-box">
    <location>
        <begin position="15"/>
        <end position="62"/>
    </location>
</feature>
<feature type="repeat" description="LRR 1">
    <location>
        <begin position="96"/>
        <end position="122"/>
    </location>
</feature>
<feature type="repeat" description="LRR 2">
    <location>
        <begin position="123"/>
        <end position="150"/>
    </location>
</feature>
<feature type="repeat" description="LRR 3">
    <location>
        <begin position="152"/>
        <end position="178"/>
    </location>
</feature>
<feature type="repeat" description="LRR 4">
    <location>
        <begin position="197"/>
        <end position="222"/>
    </location>
</feature>
<feature type="repeat" description="LRR 5">
    <location>
        <begin position="223"/>
        <end position="249"/>
    </location>
</feature>
<feature type="repeat" description="LRR 6">
    <location>
        <begin position="273"/>
        <end position="298"/>
    </location>
</feature>
<feature type="domain" description="FBD">
    <location>
        <begin position="359"/>
        <end position="413"/>
    </location>
</feature>
<keyword id="KW-0433">Leucine-rich repeat</keyword>
<keyword id="KW-1185">Reference proteome</keyword>
<keyword id="KW-0677">Repeat</keyword>
<reference key="1">
    <citation type="journal article" date="2000" name="Nature">
        <title>Sequence and analysis of chromosome 1 of the plant Arabidopsis thaliana.</title>
        <authorList>
            <person name="Theologis A."/>
            <person name="Ecker J.R."/>
            <person name="Palm C.J."/>
            <person name="Federspiel N.A."/>
            <person name="Kaul S."/>
            <person name="White O."/>
            <person name="Alonso J."/>
            <person name="Altafi H."/>
            <person name="Araujo R."/>
            <person name="Bowman C.L."/>
            <person name="Brooks S.Y."/>
            <person name="Buehler E."/>
            <person name="Chan A."/>
            <person name="Chao Q."/>
            <person name="Chen H."/>
            <person name="Cheuk R.F."/>
            <person name="Chin C.W."/>
            <person name="Chung M.K."/>
            <person name="Conn L."/>
            <person name="Conway A.B."/>
            <person name="Conway A.R."/>
            <person name="Creasy T.H."/>
            <person name="Dewar K."/>
            <person name="Dunn P."/>
            <person name="Etgu P."/>
            <person name="Feldblyum T.V."/>
            <person name="Feng J.-D."/>
            <person name="Fong B."/>
            <person name="Fujii C.Y."/>
            <person name="Gill J.E."/>
            <person name="Goldsmith A.D."/>
            <person name="Haas B."/>
            <person name="Hansen N.F."/>
            <person name="Hughes B."/>
            <person name="Huizar L."/>
            <person name="Hunter J.L."/>
            <person name="Jenkins J."/>
            <person name="Johnson-Hopson C."/>
            <person name="Khan S."/>
            <person name="Khaykin E."/>
            <person name="Kim C.J."/>
            <person name="Koo H.L."/>
            <person name="Kremenetskaia I."/>
            <person name="Kurtz D.B."/>
            <person name="Kwan A."/>
            <person name="Lam B."/>
            <person name="Langin-Hooper S."/>
            <person name="Lee A."/>
            <person name="Lee J.M."/>
            <person name="Lenz C.A."/>
            <person name="Li J.H."/>
            <person name="Li Y.-P."/>
            <person name="Lin X."/>
            <person name="Liu S.X."/>
            <person name="Liu Z.A."/>
            <person name="Luros J.S."/>
            <person name="Maiti R."/>
            <person name="Marziali A."/>
            <person name="Militscher J."/>
            <person name="Miranda M."/>
            <person name="Nguyen M."/>
            <person name="Nierman W.C."/>
            <person name="Osborne B.I."/>
            <person name="Pai G."/>
            <person name="Peterson J."/>
            <person name="Pham P.K."/>
            <person name="Rizzo M."/>
            <person name="Rooney T."/>
            <person name="Rowley D."/>
            <person name="Sakano H."/>
            <person name="Salzberg S.L."/>
            <person name="Schwartz J.R."/>
            <person name="Shinn P."/>
            <person name="Southwick A.M."/>
            <person name="Sun H."/>
            <person name="Tallon L.J."/>
            <person name="Tambunga G."/>
            <person name="Toriumi M.J."/>
            <person name="Town C.D."/>
            <person name="Utterback T."/>
            <person name="Van Aken S."/>
            <person name="Vaysberg M."/>
            <person name="Vysotskaia V.S."/>
            <person name="Walker M."/>
            <person name="Wu D."/>
            <person name="Yu G."/>
            <person name="Fraser C.M."/>
            <person name="Venter J.C."/>
            <person name="Davis R.W."/>
        </authorList>
    </citation>
    <scope>NUCLEOTIDE SEQUENCE [LARGE SCALE GENOMIC DNA]</scope>
    <source>
        <strain>cv. Columbia</strain>
    </source>
</reference>
<reference key="2">
    <citation type="journal article" date="2017" name="Plant J.">
        <title>Araport11: a complete reannotation of the Arabidopsis thaliana reference genome.</title>
        <authorList>
            <person name="Cheng C.Y."/>
            <person name="Krishnakumar V."/>
            <person name="Chan A.P."/>
            <person name="Thibaud-Nissen F."/>
            <person name="Schobel S."/>
            <person name="Town C.D."/>
        </authorList>
    </citation>
    <scope>GENOME REANNOTATION</scope>
    <source>
        <strain>cv. Columbia</strain>
    </source>
</reference>
<organism>
    <name type="scientific">Arabidopsis thaliana</name>
    <name type="common">Mouse-ear cress</name>
    <dbReference type="NCBI Taxonomy" id="3702"/>
    <lineage>
        <taxon>Eukaryota</taxon>
        <taxon>Viridiplantae</taxon>
        <taxon>Streptophyta</taxon>
        <taxon>Embryophyta</taxon>
        <taxon>Tracheophyta</taxon>
        <taxon>Spermatophyta</taxon>
        <taxon>Magnoliopsida</taxon>
        <taxon>eudicotyledons</taxon>
        <taxon>Gunneridae</taxon>
        <taxon>Pentapetalae</taxon>
        <taxon>rosids</taxon>
        <taxon>malvids</taxon>
        <taxon>Brassicales</taxon>
        <taxon>Brassicaceae</taxon>
        <taxon>Camelineae</taxon>
        <taxon>Arabidopsis</taxon>
    </lineage>
</organism>
<dbReference type="EMBL" id="AC018849">
    <property type="protein sequence ID" value="AAF27122.1"/>
    <property type="molecule type" value="Genomic_DNA"/>
</dbReference>
<dbReference type="EMBL" id="CP002684">
    <property type="protein sequence ID" value="AEE36409.2"/>
    <property type="molecule type" value="Genomic_DNA"/>
</dbReference>
<dbReference type="PIR" id="E96836">
    <property type="entry name" value="E96836"/>
</dbReference>
<dbReference type="RefSeq" id="NP_001319428.1">
    <property type="nucleotide sequence ID" value="NM_001334988.1"/>
</dbReference>
<dbReference type="PaxDb" id="3702-AT1G80470.1"/>
<dbReference type="ProteomicsDB" id="222593"/>
<dbReference type="EnsemblPlants" id="AT1G80470.1">
    <property type="protein sequence ID" value="AT1G80470.1"/>
    <property type="gene ID" value="AT1G80470"/>
</dbReference>
<dbReference type="GeneID" id="844386"/>
<dbReference type="Gramene" id="AT1G80470.1">
    <property type="protein sequence ID" value="AT1G80470.1"/>
    <property type="gene ID" value="AT1G80470"/>
</dbReference>
<dbReference type="KEGG" id="ath:AT1G80470"/>
<dbReference type="Araport" id="AT1G80470"/>
<dbReference type="TAIR" id="AT1G80470"/>
<dbReference type="HOGENOM" id="CLU_010721_1_3_1"/>
<dbReference type="InParanoid" id="Q9M8L5"/>
<dbReference type="OMA" id="FDGMWLL"/>
<dbReference type="PhylomeDB" id="Q9M8L5"/>
<dbReference type="PRO" id="PR:Q9M8L5"/>
<dbReference type="Proteomes" id="UP000006548">
    <property type="component" value="Chromosome 1"/>
</dbReference>
<dbReference type="ExpressionAtlas" id="Q9M8L5">
    <property type="expression patterns" value="baseline and differential"/>
</dbReference>
<dbReference type="CDD" id="cd22160">
    <property type="entry name" value="F-box_AtFBL13-like"/>
    <property type="match status" value="1"/>
</dbReference>
<dbReference type="Gene3D" id="1.20.1280.50">
    <property type="match status" value="1"/>
</dbReference>
<dbReference type="Gene3D" id="3.80.10.10">
    <property type="entry name" value="Ribonuclease Inhibitor"/>
    <property type="match status" value="1"/>
</dbReference>
<dbReference type="InterPro" id="IPR036047">
    <property type="entry name" value="F-box-like_dom_sf"/>
</dbReference>
<dbReference type="InterPro" id="IPR053781">
    <property type="entry name" value="F-box_AtFBL13-like"/>
</dbReference>
<dbReference type="InterPro" id="IPR001810">
    <property type="entry name" value="F-box_dom"/>
</dbReference>
<dbReference type="InterPro" id="IPR006566">
    <property type="entry name" value="FBD"/>
</dbReference>
<dbReference type="InterPro" id="IPR050232">
    <property type="entry name" value="FBL13/AtMIF1-like"/>
</dbReference>
<dbReference type="InterPro" id="IPR032675">
    <property type="entry name" value="LRR_dom_sf"/>
</dbReference>
<dbReference type="InterPro" id="IPR055411">
    <property type="entry name" value="LRR_FXL15/At3g58940/PEG3-like"/>
</dbReference>
<dbReference type="PANTHER" id="PTHR31900">
    <property type="entry name" value="F-BOX/RNI SUPERFAMILY PROTEIN-RELATED"/>
    <property type="match status" value="1"/>
</dbReference>
<dbReference type="PANTHER" id="PTHR31900:SF33">
    <property type="entry name" value="PROTEIN WITH RNI-LIKE_FBD-LIKE DOMAIN"/>
    <property type="match status" value="1"/>
</dbReference>
<dbReference type="Pfam" id="PF00646">
    <property type="entry name" value="F-box"/>
    <property type="match status" value="1"/>
</dbReference>
<dbReference type="Pfam" id="PF08387">
    <property type="entry name" value="FBD"/>
    <property type="match status" value="1"/>
</dbReference>
<dbReference type="Pfam" id="PF24758">
    <property type="entry name" value="LRR_At5g56370"/>
    <property type="match status" value="1"/>
</dbReference>
<dbReference type="SMART" id="SM00579">
    <property type="entry name" value="FBD"/>
    <property type="match status" value="1"/>
</dbReference>
<dbReference type="SUPFAM" id="SSF81383">
    <property type="entry name" value="F-box domain"/>
    <property type="match status" value="1"/>
</dbReference>
<dbReference type="SUPFAM" id="SSF52047">
    <property type="entry name" value="RNI-like"/>
    <property type="match status" value="1"/>
</dbReference>
<accession>Q9M8L5</accession>
<accession>F4HTX6</accession>
<gene>
    <name type="ordered locus">At1g80470</name>
    <name type="ORF">T21F11.20</name>
</gene>
<proteinExistence type="evidence at transcript level"/>
<sequence length="464" mass="52942">MAEPSVKKSKLTESDWISGLADDLLLQILSKVPTRESVFTSRMSKRWRNLWRHVPALDLDSSKFPHESDLEDFFDSFLQFDGNLKIERFKWIYNVEEHCDPEFVSRIDHVVKRGLKDLTILSKVNIEDDSVRMPVSLYSCATLVNLTLYSVVFDAPRAQLVSLPCLKTMHLEAVKFDGETILGTLISSCSFLDELTIITHDHDELGDVSVRSPSLRRFKLESMREDYDECEDPNVEVDTPGLEYMSITDYQSESFIIHNISPCAKVNIDVVFDAEDEDSVIHDFITAISTVRELTISARTLEMIHDYVESETELVPQFSNLFCLHASFSESSWEMFPTFLGCCPNLHSLFLEFDCLPEKEEINLSLVPHCFESSLEYVQLKVPITVSETSSKMELAIYFVRNCSVLKKLMLNESFGNVINKVRKIPKRSEGCKIAMPKPLHENVSHGSSLLPLICGFIPKILDQ</sequence>
<name>FDL13_ARATH</name>
<protein>
    <recommendedName>
        <fullName>F-box/FBD/LRR-repeat protein At1g80470</fullName>
    </recommendedName>
</protein>